<feature type="chain" id="PRO_0000455061" description="Terrestric acid biosynthesis cluster protein E">
    <location>
        <begin position="1"/>
        <end position="156"/>
    </location>
</feature>
<sequence>MAAPALPVSLTPALSDRDAIADALYRGVIAFDTADEVLFKSALTEDAVLVLNGTVMEGYDAIYSGCYVNIAKMDTNHFLTNMRVNITEESKAQVSCSALSQHYRGGEGMKPGSDFLLAGGLYAVELVKDAGDGLWKIKHWTLKTTWGQGDWAVFGK</sequence>
<proteinExistence type="inferred from homology"/>
<name>TRAE_PENCR</name>
<accession>A0A481WP37</accession>
<organism>
    <name type="scientific">Penicillium crustosum</name>
    <name type="common">Blue mold fungus</name>
    <dbReference type="NCBI Taxonomy" id="36656"/>
    <lineage>
        <taxon>Eukaryota</taxon>
        <taxon>Fungi</taxon>
        <taxon>Dikarya</taxon>
        <taxon>Ascomycota</taxon>
        <taxon>Pezizomycotina</taxon>
        <taxon>Eurotiomycetes</taxon>
        <taxon>Eurotiomycetidae</taxon>
        <taxon>Eurotiales</taxon>
        <taxon>Aspergillaceae</taxon>
        <taxon>Penicillium</taxon>
    </lineage>
</organism>
<gene>
    <name evidence="5" type="primary">traE</name>
</gene>
<protein>
    <recommendedName>
        <fullName evidence="5">Terrestric acid biosynthesis cluster protein E</fullName>
    </recommendedName>
</protein>
<reference key="1">
    <citation type="journal article" date="2019" name="J. Am. Chem. Soc.">
        <title>Peniphenone and penilactone formation in Penicillium crustosum via 1,4-Michael additions of ortho-quinone methide from hydroxyclavatol to gamma-butyrolactones from Crustosic Acid.</title>
        <authorList>
            <person name="Fan J."/>
            <person name="Liao G."/>
            <person name="Kindinger F."/>
            <person name="Ludwig-Radtke L."/>
            <person name="Yin W.B."/>
            <person name="Li S.M."/>
        </authorList>
    </citation>
    <scope>NUCLEOTIDE SEQUENCE [GENOMIC DNA]</scope>
    <scope>FUNCTION</scope>
    <scope>DISRUPTION PHENOTYPE</scope>
    <source>
        <strain>PRB-2</strain>
    </source>
</reference>
<reference key="2">
    <citation type="journal article" date="2020" name="J. Org. Chem.">
        <title>Increasing Structural Diversity of Natural Products by Michael Addition with ortho-Quinone Methide as the Acceptor.</title>
        <authorList>
            <person name="Liao G."/>
            <person name="Fan J."/>
            <person name="Ludwig-Radtke L."/>
            <person name="Backhaus K."/>
            <person name="Li S.M."/>
        </authorList>
    </citation>
    <scope>FUNCTION</scope>
</reference>
<evidence type="ECO:0000250" key="1">
    <source>
        <dbReference type="UniProtKB" id="A0A0E0RXA7"/>
    </source>
</evidence>
<evidence type="ECO:0000250" key="2">
    <source>
        <dbReference type="UniProtKB" id="A0A161CKG1"/>
    </source>
</evidence>
<evidence type="ECO:0000269" key="3">
    <source>
    </source>
</evidence>
<evidence type="ECO:0000269" key="4">
    <source>
    </source>
</evidence>
<evidence type="ECO:0000303" key="5">
    <source>
    </source>
</evidence>
<evidence type="ECO:0000305" key="6">
    <source>
    </source>
</evidence>
<comment type="function">
    <text evidence="1 2 3 4">Part of the tra gene cluster that produces terrestric acid (PubMed:30811183). The clavatol biosynthesis cluster cla and the terrestric acid cluster tra are both involved in the production of peniphenones and penilactones (PubMed:30811183). The non-reducing PKS claF is responsible for the formation of clavatol from successive condensations of 3 malonyl-CoA units, presumably with a simple acetyl-CoA starter unit, and 2 methylation steps (PubMed:30811183). The esterase claE probably collaborates with claF by catalyzing the hydrolysis of ACP-bound acyl intermediates to free the ACP from stalled intermediates (By similarity). The clavatol oxidase claD then converts clavatol to hydroxyclavatol (PubMed:30811183). Spontaneous dehydration of hydroxyclavatol leads to the accumulation of the highly active ortho-quinone methide (PubMed:30811183, PubMed:31860310). On the other hand, the PKS-NRPS hybrid traA is involved in the formation of crustosic acid, with the help of traB and traD (PubMed:30811183). The polyketide synthase module (PKS) of traA is responsible for the synthesis of the polyketide backbone via the condensation of an acetyl-CoA starter unit with 3 malonyl-CoA units (PubMed:30811183). The downstream nonribosomal peptide synthetase (NRPS) module then amidates the carboxyl end of the polyketide with L-malic acid (PubMed:30811183). Because traA lacks a designated enoylreductase (ER) domain, the required activity is provided the enoyl reductase traG (By similarity). Crustosic acid undergoes decarboxylation and isomerization to the terrestric acid, catalyzed by the 2-oxoglutarate-dependent dioxygenase traH (PubMed:30811183). Both acids are further converted to the 2 gamma-butyrolactones (R)-5-methyltetronic acid and (S)-5-carboxylmethyltetronic acid, with involvement of the cytochrome P450 monooxygenase claJ (PubMed:30811183). Spontaneous addition of the methide to these gamma-butyrolactones leads to peniphenone D and penilactone D, which undergo again stereospecific attacking by methide to give penilactones A and B (PubMed:30811183, PubMed:31860310). TraE seems not to be involved in the biosynthesis of peniphenones and penilactones in the conditions used to study its function (PubMed:30811183).</text>
</comment>
<comment type="pathway">
    <text evidence="6">Secondary metabolite biosynthesis.</text>
</comment>
<comment type="disruption phenotype">
    <text evidence="3">Does not result in significant changes in sencondary metabolites production.</text>
</comment>
<dbReference type="EMBL" id="MK360919">
    <property type="protein sequence ID" value="QBK15053.1"/>
    <property type="molecule type" value="Genomic_DNA"/>
</dbReference>
<dbReference type="SMR" id="A0A481WP37"/>
<dbReference type="OrthoDB" id="2148716at2759"/>
<dbReference type="Gene3D" id="3.10.450.50">
    <property type="match status" value="1"/>
</dbReference>
<dbReference type="InterPro" id="IPR032710">
    <property type="entry name" value="NTF2-like_dom_sf"/>
</dbReference>
<dbReference type="InterPro" id="IPR037401">
    <property type="entry name" value="SnoaL-like"/>
</dbReference>
<dbReference type="Pfam" id="PF13577">
    <property type="entry name" value="SnoaL_4"/>
    <property type="match status" value="1"/>
</dbReference>
<dbReference type="SUPFAM" id="SSF54427">
    <property type="entry name" value="NTF2-like"/>
    <property type="match status" value="1"/>
</dbReference>